<name>ANMK_HAHCH</name>
<comment type="function">
    <text evidence="1">Catalyzes the specific phosphorylation of 1,6-anhydro-N-acetylmuramic acid (anhMurNAc) with the simultaneous cleavage of the 1,6-anhydro ring, generating MurNAc-6-P. Is required for the utilization of anhMurNAc either imported from the medium or derived from its own cell wall murein, and thus plays a role in cell wall recycling.</text>
</comment>
<comment type="catalytic activity">
    <reaction evidence="1">
        <text>1,6-anhydro-N-acetyl-beta-muramate + ATP + H2O = N-acetyl-D-muramate 6-phosphate + ADP + H(+)</text>
        <dbReference type="Rhea" id="RHEA:24952"/>
        <dbReference type="ChEBI" id="CHEBI:15377"/>
        <dbReference type="ChEBI" id="CHEBI:15378"/>
        <dbReference type="ChEBI" id="CHEBI:30616"/>
        <dbReference type="ChEBI" id="CHEBI:58690"/>
        <dbReference type="ChEBI" id="CHEBI:58722"/>
        <dbReference type="ChEBI" id="CHEBI:456216"/>
        <dbReference type="EC" id="2.7.1.170"/>
    </reaction>
</comment>
<comment type="pathway">
    <text evidence="1">Amino-sugar metabolism; 1,6-anhydro-N-acetylmuramate degradation.</text>
</comment>
<comment type="pathway">
    <text evidence="1">Cell wall biogenesis; peptidoglycan recycling.</text>
</comment>
<comment type="similarity">
    <text evidence="1">Belongs to the anhydro-N-acetylmuramic acid kinase family.</text>
</comment>
<evidence type="ECO:0000255" key="1">
    <source>
        <dbReference type="HAMAP-Rule" id="MF_01270"/>
    </source>
</evidence>
<sequence>MKDREIFAGLMSGTSLDGVDTALASFQGELPETIATSFTPFPSDLKYKLHHLAVADSWRPDELFAAESQLTLLYAEAINDLLQSADIDRSRIHAIGCHGQTIRHRPAINWPYTCQLGNPSLLAEKTGITVIADFRRRDIAAGGEGAPLAPAFHMHVLQHRFPNCAVVNIGGIANITQWSEKANAVVGFDCGPGNILMDAWCSQAFQQNCDHGGQIARTGSINHALLQEMKKEPFFSLSAPKSTGRELFNHDWLQANLQKTASVDDRDILATLTELTAQTICEALNTNTLTHLFVCGGGAHNLFLMERLSRHLPGILVKGTDSAGIDPDFMEAMAFAWLAMRTLARLPGNIPAVTRAQGERILGAIYPA</sequence>
<feature type="chain" id="PRO_0000250004" description="Anhydro-N-acetylmuramic acid kinase">
    <location>
        <begin position="1"/>
        <end position="368"/>
    </location>
</feature>
<feature type="binding site" evidence="1">
    <location>
        <begin position="13"/>
        <end position="20"/>
    </location>
    <ligand>
        <name>ATP</name>
        <dbReference type="ChEBI" id="CHEBI:30616"/>
    </ligand>
</feature>
<accession>Q2S8Y7</accession>
<protein>
    <recommendedName>
        <fullName evidence="1">Anhydro-N-acetylmuramic acid kinase</fullName>
        <ecNumber evidence="1">2.7.1.170</ecNumber>
    </recommendedName>
    <alternativeName>
        <fullName evidence="1">AnhMurNAc kinase</fullName>
    </alternativeName>
</protein>
<proteinExistence type="inferred from homology"/>
<keyword id="KW-0067">ATP-binding</keyword>
<keyword id="KW-0119">Carbohydrate metabolism</keyword>
<keyword id="KW-0418">Kinase</keyword>
<keyword id="KW-0547">Nucleotide-binding</keyword>
<keyword id="KW-1185">Reference proteome</keyword>
<keyword id="KW-0808">Transferase</keyword>
<reference key="1">
    <citation type="journal article" date="2005" name="Nucleic Acids Res.">
        <title>Genomic blueprint of Hahella chejuensis, a marine microbe producing an algicidal agent.</title>
        <authorList>
            <person name="Jeong H."/>
            <person name="Yim J.H."/>
            <person name="Lee C."/>
            <person name="Choi S.-H."/>
            <person name="Park Y.K."/>
            <person name="Yoon S.H."/>
            <person name="Hur C.-G."/>
            <person name="Kang H.-Y."/>
            <person name="Kim D."/>
            <person name="Lee H.H."/>
            <person name="Park K.H."/>
            <person name="Park S.-H."/>
            <person name="Park H.-S."/>
            <person name="Lee H.K."/>
            <person name="Oh T.K."/>
            <person name="Kim J.F."/>
        </authorList>
    </citation>
    <scope>NUCLEOTIDE SEQUENCE [LARGE SCALE GENOMIC DNA]</scope>
    <source>
        <strain>KCTC 2396</strain>
    </source>
</reference>
<dbReference type="EC" id="2.7.1.170" evidence="1"/>
<dbReference type="EMBL" id="CP000155">
    <property type="protein sequence ID" value="ABC32887.1"/>
    <property type="molecule type" value="Genomic_DNA"/>
</dbReference>
<dbReference type="RefSeq" id="WP_011399943.1">
    <property type="nucleotide sequence ID" value="NC_007645.1"/>
</dbReference>
<dbReference type="SMR" id="Q2S8Y7"/>
<dbReference type="STRING" id="349521.HCH_06240"/>
<dbReference type="KEGG" id="hch:HCH_06240"/>
<dbReference type="eggNOG" id="COG2377">
    <property type="taxonomic scope" value="Bacteria"/>
</dbReference>
<dbReference type="HOGENOM" id="CLU_038782_0_0_6"/>
<dbReference type="OrthoDB" id="9763949at2"/>
<dbReference type="UniPathway" id="UPA00343"/>
<dbReference type="UniPathway" id="UPA00544"/>
<dbReference type="Proteomes" id="UP000000238">
    <property type="component" value="Chromosome"/>
</dbReference>
<dbReference type="GO" id="GO:0005524">
    <property type="term" value="F:ATP binding"/>
    <property type="evidence" value="ECO:0007669"/>
    <property type="project" value="UniProtKB-UniRule"/>
</dbReference>
<dbReference type="GO" id="GO:0016301">
    <property type="term" value="F:kinase activity"/>
    <property type="evidence" value="ECO:0007669"/>
    <property type="project" value="UniProtKB-KW"/>
</dbReference>
<dbReference type="GO" id="GO:0016773">
    <property type="term" value="F:phosphotransferase activity, alcohol group as acceptor"/>
    <property type="evidence" value="ECO:0007669"/>
    <property type="project" value="UniProtKB-UniRule"/>
</dbReference>
<dbReference type="GO" id="GO:0097175">
    <property type="term" value="P:1,6-anhydro-N-acetyl-beta-muramic acid catabolic process"/>
    <property type="evidence" value="ECO:0007669"/>
    <property type="project" value="UniProtKB-UniRule"/>
</dbReference>
<dbReference type="GO" id="GO:0006040">
    <property type="term" value="P:amino sugar metabolic process"/>
    <property type="evidence" value="ECO:0007669"/>
    <property type="project" value="InterPro"/>
</dbReference>
<dbReference type="GO" id="GO:0009254">
    <property type="term" value="P:peptidoglycan turnover"/>
    <property type="evidence" value="ECO:0007669"/>
    <property type="project" value="UniProtKB-UniRule"/>
</dbReference>
<dbReference type="CDD" id="cd24050">
    <property type="entry name" value="ASKHA_NBD_ANMK"/>
    <property type="match status" value="1"/>
</dbReference>
<dbReference type="Gene3D" id="3.30.420.40">
    <property type="match status" value="2"/>
</dbReference>
<dbReference type="HAMAP" id="MF_01270">
    <property type="entry name" value="AnhMurNAc_kinase"/>
    <property type="match status" value="1"/>
</dbReference>
<dbReference type="InterPro" id="IPR005338">
    <property type="entry name" value="Anhydro_N_Ac-Mur_kinase"/>
</dbReference>
<dbReference type="InterPro" id="IPR043129">
    <property type="entry name" value="ATPase_NBD"/>
</dbReference>
<dbReference type="NCBIfam" id="NF007139">
    <property type="entry name" value="PRK09585.1-3"/>
    <property type="match status" value="1"/>
</dbReference>
<dbReference type="PANTHER" id="PTHR30605">
    <property type="entry name" value="ANHYDRO-N-ACETYLMURAMIC ACID KINASE"/>
    <property type="match status" value="1"/>
</dbReference>
<dbReference type="PANTHER" id="PTHR30605:SF0">
    <property type="entry name" value="ANHYDRO-N-ACETYLMURAMIC ACID KINASE"/>
    <property type="match status" value="1"/>
</dbReference>
<dbReference type="Pfam" id="PF03702">
    <property type="entry name" value="AnmK"/>
    <property type="match status" value="1"/>
</dbReference>
<dbReference type="SUPFAM" id="SSF53067">
    <property type="entry name" value="Actin-like ATPase domain"/>
    <property type="match status" value="1"/>
</dbReference>
<gene>
    <name evidence="1" type="primary">anmK</name>
    <name type="ordered locus">HCH_06240</name>
</gene>
<organism>
    <name type="scientific">Hahella chejuensis (strain KCTC 2396)</name>
    <dbReference type="NCBI Taxonomy" id="349521"/>
    <lineage>
        <taxon>Bacteria</taxon>
        <taxon>Pseudomonadati</taxon>
        <taxon>Pseudomonadota</taxon>
        <taxon>Gammaproteobacteria</taxon>
        <taxon>Oceanospirillales</taxon>
        <taxon>Hahellaceae</taxon>
        <taxon>Hahella</taxon>
    </lineage>
</organism>